<feature type="signal peptide" evidence="2">
    <location>
        <begin position="1"/>
        <end position="20"/>
    </location>
</feature>
<feature type="propeptide" id="PRO_0000023589" evidence="2">
    <location>
        <begin position="21"/>
        <end position="30"/>
    </location>
</feature>
<feature type="chain" id="PRO_0000023590" description="Complement component C8 alpha chain">
    <location>
        <begin position="31"/>
        <end position="585"/>
    </location>
</feature>
<feature type="transmembrane region" description="Beta stranded" evidence="1">
    <location>
        <begin position="248"/>
        <end position="256"/>
    </location>
</feature>
<feature type="transmembrane region" description="Beta stranded" evidence="1">
    <location>
        <begin position="259"/>
        <end position="266"/>
    </location>
</feature>
<feature type="transmembrane region" description="Beta stranded" evidence="1">
    <location>
        <begin position="377"/>
        <end position="384"/>
    </location>
</feature>
<feature type="transmembrane region" description="Beta stranded" evidence="1">
    <location>
        <begin position="391"/>
        <end position="396"/>
    </location>
</feature>
<feature type="domain" description="TSP type-1 1" evidence="4">
    <location>
        <begin position="38"/>
        <end position="91"/>
    </location>
</feature>
<feature type="domain" description="LDL-receptor class A" evidence="3">
    <location>
        <begin position="94"/>
        <end position="132"/>
    </location>
</feature>
<feature type="domain" description="MACPF" evidence="5">
    <location>
        <begin position="136"/>
        <end position="499"/>
    </location>
</feature>
<feature type="domain" description="EGF-like">
    <location>
        <begin position="499"/>
        <end position="530"/>
    </location>
</feature>
<feature type="domain" description="TSP type-1 2" evidence="4">
    <location>
        <begin position="540"/>
        <end position="584"/>
    </location>
</feature>
<feature type="binding site" evidence="1">
    <location>
        <position position="113"/>
    </location>
    <ligand>
        <name>Ca(2+)</name>
        <dbReference type="ChEBI" id="CHEBI:29108"/>
    </ligand>
</feature>
<feature type="binding site" evidence="1">
    <location>
        <position position="116"/>
    </location>
    <ligand>
        <name>Ca(2+)</name>
        <dbReference type="ChEBI" id="CHEBI:29108"/>
    </ligand>
</feature>
<feature type="binding site" evidence="1">
    <location>
        <position position="118"/>
    </location>
    <ligand>
        <name>Ca(2+)</name>
        <dbReference type="ChEBI" id="CHEBI:29108"/>
    </ligand>
</feature>
<feature type="binding site" evidence="1">
    <location>
        <position position="120"/>
    </location>
    <ligand>
        <name>Ca(2+)</name>
        <dbReference type="ChEBI" id="CHEBI:29108"/>
    </ligand>
</feature>
<feature type="binding site" evidence="1">
    <location>
        <position position="126"/>
    </location>
    <ligand>
        <name>Ca(2+)</name>
        <dbReference type="ChEBI" id="CHEBI:29108"/>
    </ligand>
</feature>
<feature type="binding site" evidence="1">
    <location>
        <position position="127"/>
    </location>
    <ligand>
        <name>Ca(2+)</name>
        <dbReference type="ChEBI" id="CHEBI:29108"/>
    </ligand>
</feature>
<feature type="glycosylation site" description="C-linked (Man) tryptophan" evidence="1">
    <location>
        <position position="44"/>
    </location>
</feature>
<feature type="glycosylation site" description="N-linked (GlcNAc...) asparagine" evidence="2">
    <location>
        <position position="438"/>
    </location>
</feature>
<feature type="glycosylation site" description="C-linked (Man) tryptophan" evidence="1">
    <location>
        <position position="543"/>
    </location>
</feature>
<feature type="glycosylation site" description="C-linked (Man) tryptophan" evidence="1">
    <location>
        <position position="546"/>
    </location>
</feature>
<feature type="glycosylation site" description="C-linked (Man) tryptophan" evidence="1">
    <location>
        <position position="549"/>
    </location>
</feature>
<feature type="disulfide bond" evidence="1">
    <location>
        <begin position="39"/>
        <end position="74"/>
    </location>
</feature>
<feature type="disulfide bond" evidence="1">
    <location>
        <begin position="50"/>
        <end position="84"/>
    </location>
</feature>
<feature type="disulfide bond" evidence="1">
    <location>
        <begin position="53"/>
        <end position="90"/>
    </location>
</feature>
<feature type="disulfide bond" evidence="1">
    <location>
        <begin position="96"/>
        <end position="108"/>
    </location>
</feature>
<feature type="disulfide bond" evidence="1">
    <location>
        <begin position="102"/>
        <end position="121"/>
    </location>
</feature>
<feature type="disulfide bond" evidence="1">
    <location>
        <begin position="115"/>
        <end position="130"/>
    </location>
</feature>
<feature type="disulfide bond" evidence="1">
    <location>
        <begin position="140"/>
        <end position="177"/>
    </location>
</feature>
<feature type="disulfide bond" description="Interchain (with C-60 in C8-gamma chain)" evidence="3 4">
    <location>
        <position position="194"/>
    </location>
</feature>
<feature type="disulfide bond" evidence="1">
    <location>
        <begin position="375"/>
        <end position="400"/>
    </location>
</feature>
<feature type="disulfide bond" evidence="1">
    <location>
        <begin position="498"/>
        <end position="545"/>
    </location>
</feature>
<feature type="disulfide bond" evidence="1">
    <location>
        <begin position="500"/>
        <end position="516"/>
    </location>
</feature>
<feature type="disulfide bond" evidence="1">
    <location>
        <begin position="503"/>
        <end position="518"/>
    </location>
</feature>
<feature type="disulfide bond" evidence="1">
    <location>
        <begin position="520"/>
        <end position="529"/>
    </location>
</feature>
<feature type="disulfide bond" evidence="1">
    <location>
        <begin position="552"/>
        <end position="585"/>
    </location>
</feature>
<feature type="disulfide bond" evidence="1">
    <location>
        <begin position="563"/>
        <end position="575"/>
    </location>
</feature>
<name>CO8A_RABIT</name>
<reference key="1">
    <citation type="journal article" date="1994" name="J. Immunol.">
        <title>Characterization of rabbit complement component C8. Functional evidence for the species-selective recognition of C8 alpha by homologous restriction factor (CD59).</title>
        <authorList>
            <person name="White R.V."/>
            <person name="Kaufman K.M."/>
            <person name="Letson C.S."/>
            <person name="Platteborze P.L."/>
            <person name="Sodetz J.M."/>
        </authorList>
    </citation>
    <scope>NUCLEOTIDE SEQUENCE [MRNA]</scope>
    <scope>PROTEIN SEQUENCE OF 31-40</scope>
    <scope>SUBUNIT</scope>
    <scope>SUBCELLULAR LOCATION</scope>
    <source>
        <strain>New Zealand white</strain>
        <tissue>Liver</tissue>
    </source>
</reference>
<protein>
    <recommendedName>
        <fullName>Complement component C8 alpha chain</fullName>
    </recommendedName>
    <alternativeName>
        <fullName>Complement component 8 subunit alpha</fullName>
    </alternativeName>
</protein>
<organism>
    <name type="scientific">Oryctolagus cuniculus</name>
    <name type="common">Rabbit</name>
    <dbReference type="NCBI Taxonomy" id="9986"/>
    <lineage>
        <taxon>Eukaryota</taxon>
        <taxon>Metazoa</taxon>
        <taxon>Chordata</taxon>
        <taxon>Craniata</taxon>
        <taxon>Vertebrata</taxon>
        <taxon>Euteleostomi</taxon>
        <taxon>Mammalia</taxon>
        <taxon>Eutheria</taxon>
        <taxon>Euarchontoglires</taxon>
        <taxon>Glires</taxon>
        <taxon>Lagomorpha</taxon>
        <taxon>Leporidae</taxon>
        <taxon>Oryctolagus</taxon>
    </lineage>
</organism>
<accession>P98136</accession>
<sequence length="585" mass="65306">MLVAAFFTLFLVTCQPAVTAQEKVNQRVNRAATPRAFDCQLSSWSEWTDCFPCQDTKYRHRSLLQPNKFGGTICSGDIWDRASCYSPTACLRPAQCGQDFQCKETGRCLKRHLVCNGENDCLDGSDEDNCEDIRATESDCAQYDPIPGSEKAALGYNILTQEEAQSVYDARYYGGRCETVYNGEWRHVRYDPVCERLHHGEDDKYFRKPYNFLKYHFEARADTGISFELYVDGNDLFSKVKNDKSHSAGVTISAGLTGSPLLGTVGVSGSEDASFLNKLSQYNEKKYNFMRIFTKVQTAHFKMRRDDIVLDEGMLQALVELPEQYNYGMYSKFINDYGTHYITSGSMGGTYEYILVLNTEKMESLGVTSEDISSCFGGFGEIQYEKGKINAQGILSGKHCKKSGSGDKEADKMGQAVKDIISRVRGGSSGWGGGLSQNGSATTYRFWGRSLKYNPVVIDFEMQPIHEVLLHTNLGHVEAKRQNLRRALDQYLMEFNACRCGPCFNNGKPILEGTSCRCQCSLGLQGPACEQTEQQGAKADGHWSCWGSWSPCTAGTRERRRECNNPAPQNGGAPCPGWRVQTQAC</sequence>
<keyword id="KW-0106">Calcium</keyword>
<keyword id="KW-0179">Complement alternate pathway</keyword>
<keyword id="KW-0180">Complement pathway</keyword>
<keyword id="KW-0204">Cytolysis</keyword>
<keyword id="KW-0903">Direct protein sequencing</keyword>
<keyword id="KW-1015">Disulfide bond</keyword>
<keyword id="KW-0245">EGF-like domain</keyword>
<keyword id="KW-0325">Glycoprotein</keyword>
<keyword id="KW-0391">Immunity</keyword>
<keyword id="KW-0399">Innate immunity</keyword>
<keyword id="KW-0472">Membrane</keyword>
<keyword id="KW-0473">Membrane attack complex</keyword>
<keyword id="KW-0479">Metal-binding</keyword>
<keyword id="KW-1185">Reference proteome</keyword>
<keyword id="KW-0677">Repeat</keyword>
<keyword id="KW-0964">Secreted</keyword>
<keyword id="KW-0732">Signal</keyword>
<keyword id="KW-1052">Target cell membrane</keyword>
<keyword id="KW-1053">Target membrane</keyword>
<keyword id="KW-0812">Transmembrane</keyword>
<keyword id="KW-1134">Transmembrane beta strand</keyword>
<gene>
    <name type="primary">C8A</name>
</gene>
<proteinExistence type="evidence at protein level"/>
<dbReference type="EMBL" id="L26981">
    <property type="protein sequence ID" value="AAA31191.1"/>
    <property type="molecule type" value="mRNA"/>
</dbReference>
<dbReference type="PIR" id="I46686">
    <property type="entry name" value="I46686"/>
</dbReference>
<dbReference type="RefSeq" id="NP_001075724.1">
    <property type="nucleotide sequence ID" value="NM_001082255.1"/>
</dbReference>
<dbReference type="SMR" id="P98136"/>
<dbReference type="CORUM" id="P98136"/>
<dbReference type="FunCoup" id="P98136">
    <property type="interactions" value="34"/>
</dbReference>
<dbReference type="STRING" id="9986.ENSOCUP00000032867"/>
<dbReference type="GlyCosmos" id="P98136">
    <property type="glycosylation" value="5 sites, No reported glycans"/>
</dbReference>
<dbReference type="PaxDb" id="9986-ENSOCUP00000014764"/>
<dbReference type="GeneID" id="100009076"/>
<dbReference type="KEGG" id="ocu:100009076"/>
<dbReference type="CTD" id="731"/>
<dbReference type="eggNOG" id="ENOG502QT87">
    <property type="taxonomic scope" value="Eukaryota"/>
</dbReference>
<dbReference type="InParanoid" id="P98136"/>
<dbReference type="OrthoDB" id="6150863at2759"/>
<dbReference type="Proteomes" id="UP000001811">
    <property type="component" value="Unplaced"/>
</dbReference>
<dbReference type="GO" id="GO:0005576">
    <property type="term" value="C:extracellular region"/>
    <property type="evidence" value="ECO:0007669"/>
    <property type="project" value="UniProtKB-SubCell"/>
</dbReference>
<dbReference type="GO" id="GO:0005579">
    <property type="term" value="C:membrane attack complex"/>
    <property type="evidence" value="ECO:0007669"/>
    <property type="project" value="UniProtKB-KW"/>
</dbReference>
<dbReference type="GO" id="GO:0006957">
    <property type="term" value="P:complement activation, alternative pathway"/>
    <property type="evidence" value="ECO:0007669"/>
    <property type="project" value="UniProtKB-KW"/>
</dbReference>
<dbReference type="GO" id="GO:0006958">
    <property type="term" value="P:complement activation, classical pathway"/>
    <property type="evidence" value="ECO:0007669"/>
    <property type="project" value="UniProtKB-KW"/>
</dbReference>
<dbReference type="GO" id="GO:0031640">
    <property type="term" value="P:killing of cells of another organism"/>
    <property type="evidence" value="ECO:0007669"/>
    <property type="project" value="UniProtKB-KW"/>
</dbReference>
<dbReference type="CDD" id="cd00112">
    <property type="entry name" value="LDLa"/>
    <property type="match status" value="1"/>
</dbReference>
<dbReference type="FunFam" id="4.10.400.10:FF:000069">
    <property type="entry name" value="complement component C8 beta chain"/>
    <property type="match status" value="1"/>
</dbReference>
<dbReference type="Gene3D" id="4.10.400.10">
    <property type="entry name" value="Low-density Lipoprotein Receptor"/>
    <property type="match status" value="1"/>
</dbReference>
<dbReference type="Gene3D" id="2.20.100.10">
    <property type="entry name" value="Thrombospondin type-1 (TSP1) repeat"/>
    <property type="match status" value="2"/>
</dbReference>
<dbReference type="InterPro" id="IPR048831">
    <property type="entry name" value="C8A_B_C6_EGF-like"/>
</dbReference>
<dbReference type="InterPro" id="IPR036055">
    <property type="entry name" value="LDL_receptor-like_sf"/>
</dbReference>
<dbReference type="InterPro" id="IPR023415">
    <property type="entry name" value="LDLR_class-A_CS"/>
</dbReference>
<dbReference type="InterPro" id="IPR002172">
    <property type="entry name" value="LDrepeatLR_classA_rpt"/>
</dbReference>
<dbReference type="InterPro" id="IPR001862">
    <property type="entry name" value="MAC_perforin"/>
</dbReference>
<dbReference type="InterPro" id="IPR020864">
    <property type="entry name" value="MACPF"/>
</dbReference>
<dbReference type="InterPro" id="IPR020863">
    <property type="entry name" value="MACPF_CS"/>
</dbReference>
<dbReference type="InterPro" id="IPR000884">
    <property type="entry name" value="TSP1_rpt"/>
</dbReference>
<dbReference type="InterPro" id="IPR036383">
    <property type="entry name" value="TSP1_rpt_sf"/>
</dbReference>
<dbReference type="PANTHER" id="PTHR45742">
    <property type="entry name" value="COMPLEMENT COMPONENT C6"/>
    <property type="match status" value="1"/>
</dbReference>
<dbReference type="PANTHER" id="PTHR45742:SF1">
    <property type="entry name" value="COMPLEMENT COMPONENT C8 ALPHA CHAIN"/>
    <property type="match status" value="1"/>
</dbReference>
<dbReference type="Pfam" id="PF21195">
    <property type="entry name" value="EGF_C8A_B_C6"/>
    <property type="match status" value="1"/>
</dbReference>
<dbReference type="Pfam" id="PF00057">
    <property type="entry name" value="Ldl_recept_a"/>
    <property type="match status" value="1"/>
</dbReference>
<dbReference type="Pfam" id="PF01823">
    <property type="entry name" value="MACPF"/>
    <property type="match status" value="1"/>
</dbReference>
<dbReference type="Pfam" id="PF00090">
    <property type="entry name" value="TSP_1"/>
    <property type="match status" value="2"/>
</dbReference>
<dbReference type="PRINTS" id="PR00764">
    <property type="entry name" value="COMPLEMENTC9"/>
</dbReference>
<dbReference type="PRINTS" id="PR01705">
    <property type="entry name" value="TSP1REPEAT"/>
</dbReference>
<dbReference type="SMART" id="SM00192">
    <property type="entry name" value="LDLa"/>
    <property type="match status" value="1"/>
</dbReference>
<dbReference type="SMART" id="SM00457">
    <property type="entry name" value="MACPF"/>
    <property type="match status" value="1"/>
</dbReference>
<dbReference type="SMART" id="SM00209">
    <property type="entry name" value="TSP1"/>
    <property type="match status" value="2"/>
</dbReference>
<dbReference type="SUPFAM" id="SSF57424">
    <property type="entry name" value="LDL receptor-like module"/>
    <property type="match status" value="1"/>
</dbReference>
<dbReference type="SUPFAM" id="SSF82895">
    <property type="entry name" value="TSP-1 type 1 repeat"/>
    <property type="match status" value="2"/>
</dbReference>
<dbReference type="PROSITE" id="PS00022">
    <property type="entry name" value="EGF_1"/>
    <property type="match status" value="1"/>
</dbReference>
<dbReference type="PROSITE" id="PS01209">
    <property type="entry name" value="LDLRA_1"/>
    <property type="match status" value="1"/>
</dbReference>
<dbReference type="PROSITE" id="PS50068">
    <property type="entry name" value="LDLRA_2"/>
    <property type="match status" value="1"/>
</dbReference>
<dbReference type="PROSITE" id="PS00279">
    <property type="entry name" value="MACPF_1"/>
    <property type="match status" value="1"/>
</dbReference>
<dbReference type="PROSITE" id="PS51412">
    <property type="entry name" value="MACPF_2"/>
    <property type="match status" value="1"/>
</dbReference>
<dbReference type="PROSITE" id="PS50092">
    <property type="entry name" value="TSP1"/>
    <property type="match status" value="2"/>
</dbReference>
<comment type="function">
    <text evidence="1">Component of the membrane attack complex (MAC), a multiprotein complex activated by the complement cascade, which inserts into a target cell membrane and forms a pore, leading to target cell membrane rupture and cell lysis. The MAC is initiated by proteolytic cleavage of C5 into complement C5b in response to the classical, alternative, lectin and GZMK complement pathways. The complement pathways consist in a cascade of proteins that leads to phagocytosis and breakdown of pathogens and signaling that strengthens the adaptive immune system. C8A, together with C8B and C8G, inserts into the target membrane, but does not form pores by itself. During MAC assembly, associates with C5b, C6 and C7 to form the C5b8 intermediate complex that inserts into the target membrane and traverses the bilayer increasing membrane rigidity.</text>
</comment>
<comment type="activity regulation">
    <text evidence="1">Membrane attack complex (MAC) assembly is inhibited by CD59, thereby protecting self-cells from damage during complement activation. CD59 acts by binding to the beta-haipins of C8 (C8A and C8B), forming an intermolecular beta-sheet that prevents incorporation of the multiple copies of C9 required for complete formation of the osmolytic pore. MAC assembly is also inhibited by clusterin (CLU) chaperones that inhibit polymerization of C9.</text>
</comment>
<comment type="subunit">
    <text evidence="1">Heterotrimer of 3 chains: alpha (C8A), beta (C8B) and gamma (C8G); the alpha and gamma chains are disulfide bonded. Component of the membrane attack complex (MAC), composed of complement C5b, C6, C7, C8A, C8B, C8G and multiple copies of the pore-forming subunit C9.</text>
</comment>
<comment type="subcellular location">
    <subcellularLocation>
        <location evidence="1">Secreted</location>
    </subcellularLocation>
    <subcellularLocation>
        <location evidence="1">Target cell membrane</location>
        <topology evidence="1">Multi-pass membrane protein</topology>
    </subcellularLocation>
    <text evidence="1">Secreted as soluble protein. Inserts into the cell membrane of target cells.</text>
</comment>
<comment type="similarity">
    <text evidence="6">Belongs to the complement C6/C7/C8/C9 family.</text>
</comment>
<evidence type="ECO:0000250" key="1">
    <source>
        <dbReference type="UniProtKB" id="P07357"/>
    </source>
</evidence>
<evidence type="ECO:0000255" key="2"/>
<evidence type="ECO:0000255" key="3">
    <source>
        <dbReference type="PROSITE-ProRule" id="PRU00124"/>
    </source>
</evidence>
<evidence type="ECO:0000255" key="4">
    <source>
        <dbReference type="PROSITE-ProRule" id="PRU00210"/>
    </source>
</evidence>
<evidence type="ECO:0000255" key="5">
    <source>
        <dbReference type="PROSITE-ProRule" id="PRU00745"/>
    </source>
</evidence>
<evidence type="ECO:0000305" key="6"/>